<proteinExistence type="inferred from homology"/>
<reference key="1">
    <citation type="submission" date="2007-03" db="EMBL/GenBank/DDBJ databases">
        <title>Complete sequence of chromosome 1 of Burkholderia vietnamiensis G4.</title>
        <authorList>
            <consortium name="US DOE Joint Genome Institute"/>
            <person name="Copeland A."/>
            <person name="Lucas S."/>
            <person name="Lapidus A."/>
            <person name="Barry K."/>
            <person name="Detter J.C."/>
            <person name="Glavina del Rio T."/>
            <person name="Hammon N."/>
            <person name="Israni S."/>
            <person name="Dalin E."/>
            <person name="Tice H."/>
            <person name="Pitluck S."/>
            <person name="Chain P."/>
            <person name="Malfatti S."/>
            <person name="Shin M."/>
            <person name="Vergez L."/>
            <person name="Schmutz J."/>
            <person name="Larimer F."/>
            <person name="Land M."/>
            <person name="Hauser L."/>
            <person name="Kyrpides N."/>
            <person name="Tiedje J."/>
            <person name="Richardson P."/>
        </authorList>
    </citation>
    <scope>NUCLEOTIDE SEQUENCE [LARGE SCALE GENOMIC DNA]</scope>
    <source>
        <strain>G4 / LMG 22486</strain>
    </source>
</reference>
<evidence type="ECO:0000255" key="1">
    <source>
        <dbReference type="HAMAP-Rule" id="MF_00758"/>
    </source>
</evidence>
<protein>
    <recommendedName>
        <fullName evidence="1">UPF0301 protein Bcep1808_0798</fullName>
    </recommendedName>
</protein>
<gene>
    <name type="ordered locus">Bcep1808_0798</name>
</gene>
<dbReference type="EMBL" id="CP000614">
    <property type="protein sequence ID" value="ABO53810.1"/>
    <property type="molecule type" value="Genomic_DNA"/>
</dbReference>
<dbReference type="SMR" id="A4JC07"/>
<dbReference type="KEGG" id="bvi:Bcep1808_0798"/>
<dbReference type="eggNOG" id="COG1678">
    <property type="taxonomic scope" value="Bacteria"/>
</dbReference>
<dbReference type="HOGENOM" id="CLU_057596_1_0_4"/>
<dbReference type="Proteomes" id="UP000002287">
    <property type="component" value="Chromosome 1"/>
</dbReference>
<dbReference type="GO" id="GO:0005829">
    <property type="term" value="C:cytosol"/>
    <property type="evidence" value="ECO:0007669"/>
    <property type="project" value="TreeGrafter"/>
</dbReference>
<dbReference type="Gene3D" id="3.40.1740.10">
    <property type="entry name" value="VC0467-like"/>
    <property type="match status" value="1"/>
</dbReference>
<dbReference type="HAMAP" id="MF_00758">
    <property type="entry name" value="UPF0301"/>
    <property type="match status" value="1"/>
</dbReference>
<dbReference type="InterPro" id="IPR003774">
    <property type="entry name" value="AlgH-like"/>
</dbReference>
<dbReference type="NCBIfam" id="NF001266">
    <property type="entry name" value="PRK00228.1-1"/>
    <property type="match status" value="1"/>
</dbReference>
<dbReference type="NCBIfam" id="NF001267">
    <property type="entry name" value="PRK00228.1-2"/>
    <property type="match status" value="1"/>
</dbReference>
<dbReference type="PANTHER" id="PTHR30327">
    <property type="entry name" value="UNCHARACTERIZED PROTEIN YQGE"/>
    <property type="match status" value="1"/>
</dbReference>
<dbReference type="PANTHER" id="PTHR30327:SF1">
    <property type="entry name" value="UPF0301 PROTEIN YQGE"/>
    <property type="match status" value="1"/>
</dbReference>
<dbReference type="Pfam" id="PF02622">
    <property type="entry name" value="DUF179"/>
    <property type="match status" value="1"/>
</dbReference>
<dbReference type="SUPFAM" id="SSF143456">
    <property type="entry name" value="VC0467-like"/>
    <property type="match status" value="1"/>
</dbReference>
<sequence>MSKPSDRINLTNQFLIAMPNMADPTFSGTVVYLCDHSERGALGLVINRPTDIDLESLFNRIDLKLDIEPLLHIPVYFGGPVQTERGFVLHEPVEGANYNSSMSIEGGLEMTTSKDVLEAVATGTGPKRFLLTLGHAGWGAGQLEEEISRNGWLTVPADPRIVFDTPAEERFEAALGLLGVSSSMLSGEAGHA</sequence>
<comment type="similarity">
    <text evidence="1">Belongs to the UPF0301 (AlgH) family.</text>
</comment>
<accession>A4JC07</accession>
<organism>
    <name type="scientific">Burkholderia vietnamiensis (strain G4 / LMG 22486)</name>
    <name type="common">Burkholderia cepacia (strain R1808)</name>
    <dbReference type="NCBI Taxonomy" id="269482"/>
    <lineage>
        <taxon>Bacteria</taxon>
        <taxon>Pseudomonadati</taxon>
        <taxon>Pseudomonadota</taxon>
        <taxon>Betaproteobacteria</taxon>
        <taxon>Burkholderiales</taxon>
        <taxon>Burkholderiaceae</taxon>
        <taxon>Burkholderia</taxon>
        <taxon>Burkholderia cepacia complex</taxon>
    </lineage>
</organism>
<name>Y798_BURVG</name>
<feature type="chain" id="PRO_1000046650" description="UPF0301 protein Bcep1808_0798">
    <location>
        <begin position="1"/>
        <end position="192"/>
    </location>
</feature>